<protein>
    <recommendedName>
        <fullName>Ceramide-1-phosphate transfer protein</fullName>
    </recommendedName>
    <alternativeName>
        <fullName>Glycolipid transfer protein domain-containing protein 1</fullName>
        <shortName>CPTP</shortName>
    </alternativeName>
</protein>
<comment type="function">
    <text evidence="1">Mediates the intracellular transfer of ceramide-1-phosphate (C1P) between organelle membranes and the cell membrane. Required for normal structure of the Golgi stacks. Can bind phosphoceramides with a variety of aliphatic chains, but has a preference for lipids with saturated C16:0 or monounsaturated C18:1 aliphatic chains, and is inefficient with phosphoceramides containing lignoceryl (C24:0). Plays a role in the regulation of the cellular levels of ceramide-1-phosphate, and thereby contributes to the regulation of phospholipase PLA2G4A activity and the release of arachidonic acid. Has no activity with galactosylceramide, lactosylceramide, sphingomyelin, phosphatidylcholine, phosphatidic acid and ceramide. C1P transfer is stimulated by phosphatidylserine in C1P source vesicles. Regulates autophagy, inflammasome mediated IL1B and IL18 processing, and pyroptosis, but not apoptosis.</text>
</comment>
<comment type="catalytic activity">
    <reaction evidence="1">
        <text>N-(hexadecanoyl)-sphing-4-enine-1-phosphate(in) = N-(hexadecanoyl)-sphing-4-enine-1-phosphate(out)</text>
        <dbReference type="Rhea" id="RHEA:45680"/>
        <dbReference type="ChEBI" id="CHEBI:72963"/>
    </reaction>
    <physiologicalReaction direction="left-to-right" evidence="1">
        <dbReference type="Rhea" id="RHEA:45681"/>
    </physiologicalReaction>
</comment>
<comment type="catalytic activity">
    <reaction evidence="1">
        <text>N-(9Z-octadecenoyl)-sphing-4-enine-1-phosphate(in) = N-(9Z-octadecenoyl)-sphing-4-enine-1-phosphate(out)</text>
        <dbReference type="Rhea" id="RHEA:45688"/>
        <dbReference type="ChEBI" id="CHEBI:85378"/>
    </reaction>
    <physiologicalReaction direction="left-to-right" evidence="1">
        <dbReference type="Rhea" id="RHEA:45689"/>
    </physiologicalReaction>
</comment>
<comment type="subcellular location">
    <subcellularLocation>
        <location evidence="1">Cytoplasm</location>
        <location evidence="1">Cytosol</location>
    </subcellularLocation>
    <subcellularLocation>
        <location evidence="1">Golgi apparatus</location>
        <location evidence="1">trans-Golgi network membrane</location>
        <topology evidence="1">Peripheral membrane protein</topology>
    </subcellularLocation>
    <subcellularLocation>
        <location evidence="1">Cell membrane</location>
        <topology evidence="1">Peripheral membrane protein</topology>
        <orientation evidence="1">Cytoplasmic side</orientation>
    </subcellularLocation>
    <subcellularLocation>
        <location evidence="1">Endosome membrane</location>
        <topology evidence="1">Peripheral membrane protein</topology>
    </subcellularLocation>
    <subcellularLocation>
        <location evidence="1">Nucleus outer membrane</location>
        <topology evidence="1">Peripheral membrane protein</topology>
    </subcellularLocation>
</comment>
<comment type="similarity">
    <text evidence="2">Belongs to the GLTP family.</text>
</comment>
<accession>Q5XIS2</accession>
<keyword id="KW-1003">Cell membrane</keyword>
<keyword id="KW-0963">Cytoplasm</keyword>
<keyword id="KW-0967">Endosome</keyword>
<keyword id="KW-0333">Golgi apparatus</keyword>
<keyword id="KW-0445">Lipid transport</keyword>
<keyword id="KW-0446">Lipid-binding</keyword>
<keyword id="KW-0472">Membrane</keyword>
<keyword id="KW-0539">Nucleus</keyword>
<keyword id="KW-1185">Reference proteome</keyword>
<keyword id="KW-0813">Transport</keyword>
<sequence length="216" mass="24522">MDGPERDFNLKVVLISFKKCLTDKGEVLLDHYTASWKGLVRFLNSLGAVFSFISKDVVSKLQIMEHLRSGPQSEHYISLQSMVAYEVSNKLVDRDSRSRPRHPNSGCRTVLRLHRALHWLQLFLEGLRTSSEDARTSTLCSEAYNATLAAYHSWIVRQAVNVAFHALPPRKVFLEAMNMGSSEQAVEMLGEALPFIEQVYDISQKLYAEHSLLDLP</sequence>
<proteinExistence type="evidence at transcript level"/>
<name>CPTP_RAT</name>
<dbReference type="EMBL" id="BC083599">
    <property type="protein sequence ID" value="AAH83599.1"/>
    <property type="molecule type" value="mRNA"/>
</dbReference>
<dbReference type="RefSeq" id="NP_001007704.1">
    <property type="nucleotide sequence ID" value="NM_001007703.1"/>
</dbReference>
<dbReference type="RefSeq" id="XP_006239638.1">
    <property type="nucleotide sequence ID" value="XM_006239576.5"/>
</dbReference>
<dbReference type="SMR" id="Q5XIS2"/>
<dbReference type="FunCoup" id="Q5XIS2">
    <property type="interactions" value="1070"/>
</dbReference>
<dbReference type="STRING" id="10116.ENSRNOP00000034006"/>
<dbReference type="PhosphoSitePlus" id="Q5XIS2"/>
<dbReference type="PaxDb" id="10116-ENSRNOP00000034006"/>
<dbReference type="DNASU" id="313771"/>
<dbReference type="Ensembl" id="ENSRNOT00000039117.4">
    <property type="protein sequence ID" value="ENSRNOP00000034006.3"/>
    <property type="gene ID" value="ENSRNOG00000022455.4"/>
</dbReference>
<dbReference type="GeneID" id="313771"/>
<dbReference type="KEGG" id="rno:313771"/>
<dbReference type="AGR" id="RGD:1359656"/>
<dbReference type="CTD" id="80772"/>
<dbReference type="RGD" id="1359656">
    <property type="gene designation" value="Cptp"/>
</dbReference>
<dbReference type="eggNOG" id="KOG4189">
    <property type="taxonomic scope" value="Eukaryota"/>
</dbReference>
<dbReference type="GeneTree" id="ENSGT00940000161763"/>
<dbReference type="HOGENOM" id="CLU_079649_1_0_1"/>
<dbReference type="InParanoid" id="Q5XIS2"/>
<dbReference type="OMA" id="ICTDSYN"/>
<dbReference type="OrthoDB" id="116883at2759"/>
<dbReference type="PhylomeDB" id="Q5XIS2"/>
<dbReference type="TreeFam" id="TF316097"/>
<dbReference type="Reactome" id="R-RNO-9845576">
    <property type="pathway name" value="Glycosphingolipid transport"/>
</dbReference>
<dbReference type="PRO" id="PR:Q5XIS2"/>
<dbReference type="Proteomes" id="UP000002494">
    <property type="component" value="Chromosome 5"/>
</dbReference>
<dbReference type="Bgee" id="ENSRNOG00000022455">
    <property type="expression patterns" value="Expressed in testis and 19 other cell types or tissues"/>
</dbReference>
<dbReference type="GO" id="GO:0005829">
    <property type="term" value="C:cytosol"/>
    <property type="evidence" value="ECO:0000318"/>
    <property type="project" value="GO_Central"/>
</dbReference>
<dbReference type="GO" id="GO:0010008">
    <property type="term" value="C:endosome membrane"/>
    <property type="evidence" value="ECO:0007669"/>
    <property type="project" value="UniProtKB-SubCell"/>
</dbReference>
<dbReference type="GO" id="GO:0005794">
    <property type="term" value="C:Golgi apparatus"/>
    <property type="evidence" value="ECO:0007669"/>
    <property type="project" value="UniProtKB-SubCell"/>
</dbReference>
<dbReference type="GO" id="GO:0005640">
    <property type="term" value="C:nuclear outer membrane"/>
    <property type="evidence" value="ECO:0007669"/>
    <property type="project" value="UniProtKB-SubCell"/>
</dbReference>
<dbReference type="GO" id="GO:0005886">
    <property type="term" value="C:plasma membrane"/>
    <property type="evidence" value="ECO:0007669"/>
    <property type="project" value="UniProtKB-SubCell"/>
</dbReference>
<dbReference type="GO" id="GO:1902387">
    <property type="term" value="F:ceramide 1-phosphate binding"/>
    <property type="evidence" value="ECO:0000250"/>
    <property type="project" value="UniProtKB"/>
</dbReference>
<dbReference type="GO" id="GO:1902388">
    <property type="term" value="F:ceramide 1-phosphate transfer activity"/>
    <property type="evidence" value="ECO:0000250"/>
    <property type="project" value="UniProtKB"/>
</dbReference>
<dbReference type="GO" id="GO:0005543">
    <property type="term" value="F:phospholipid binding"/>
    <property type="evidence" value="ECO:0000250"/>
    <property type="project" value="UniProtKB"/>
</dbReference>
<dbReference type="GO" id="GO:1902389">
    <property type="term" value="P:ceramide 1-phosphate transport"/>
    <property type="evidence" value="ECO:0000250"/>
    <property type="project" value="UniProtKB"/>
</dbReference>
<dbReference type="GO" id="GO:0035627">
    <property type="term" value="P:ceramide transport"/>
    <property type="evidence" value="ECO:0000318"/>
    <property type="project" value="GO_Central"/>
</dbReference>
<dbReference type="GO" id="GO:0120009">
    <property type="term" value="P:intermembrane lipid transfer"/>
    <property type="evidence" value="ECO:0000318"/>
    <property type="project" value="GO_Central"/>
</dbReference>
<dbReference type="GO" id="GO:0010507">
    <property type="term" value="P:negative regulation of autophagy"/>
    <property type="evidence" value="ECO:0000250"/>
    <property type="project" value="UniProtKB"/>
</dbReference>
<dbReference type="GO" id="GO:0032691">
    <property type="term" value="P:negative regulation of interleukin-1 beta production"/>
    <property type="evidence" value="ECO:0000250"/>
    <property type="project" value="UniProtKB"/>
</dbReference>
<dbReference type="GO" id="GO:1900226">
    <property type="term" value="P:negative regulation of NLRP3 inflammasome complex assembly"/>
    <property type="evidence" value="ECO:0000250"/>
    <property type="project" value="UniProtKB"/>
</dbReference>
<dbReference type="FunFam" id="1.10.3520.10:FF:000002">
    <property type="entry name" value="Ceramide-1-phosphate transfer protein"/>
    <property type="match status" value="1"/>
</dbReference>
<dbReference type="Gene3D" id="1.10.3520.10">
    <property type="entry name" value="Glycolipid transfer protein"/>
    <property type="match status" value="1"/>
</dbReference>
<dbReference type="InterPro" id="IPR036497">
    <property type="entry name" value="GLTP_sf"/>
</dbReference>
<dbReference type="InterPro" id="IPR014830">
    <property type="entry name" value="Glycolipid_transfer_prot_dom"/>
</dbReference>
<dbReference type="PANTHER" id="PTHR10219:SF20">
    <property type="entry name" value="CERAMIDE-1-PHOSPHATE TRANSFER PROTEIN"/>
    <property type="match status" value="1"/>
</dbReference>
<dbReference type="PANTHER" id="PTHR10219">
    <property type="entry name" value="GLYCOLIPID TRANSFER PROTEIN-RELATED"/>
    <property type="match status" value="1"/>
</dbReference>
<dbReference type="Pfam" id="PF08718">
    <property type="entry name" value="GLTP"/>
    <property type="match status" value="1"/>
</dbReference>
<dbReference type="SUPFAM" id="SSF110004">
    <property type="entry name" value="Glycolipid transfer protein, GLTP"/>
    <property type="match status" value="1"/>
</dbReference>
<gene>
    <name type="primary">Cptp</name>
    <name type="synonym">Gltpd1</name>
</gene>
<organism>
    <name type="scientific">Rattus norvegicus</name>
    <name type="common">Rat</name>
    <dbReference type="NCBI Taxonomy" id="10116"/>
    <lineage>
        <taxon>Eukaryota</taxon>
        <taxon>Metazoa</taxon>
        <taxon>Chordata</taxon>
        <taxon>Craniata</taxon>
        <taxon>Vertebrata</taxon>
        <taxon>Euteleostomi</taxon>
        <taxon>Mammalia</taxon>
        <taxon>Eutheria</taxon>
        <taxon>Euarchontoglires</taxon>
        <taxon>Glires</taxon>
        <taxon>Rodentia</taxon>
        <taxon>Myomorpha</taxon>
        <taxon>Muroidea</taxon>
        <taxon>Muridae</taxon>
        <taxon>Murinae</taxon>
        <taxon>Rattus</taxon>
    </lineage>
</organism>
<feature type="chain" id="PRO_0000317158" description="Ceramide-1-phosphate transfer protein">
    <location>
        <begin position="1"/>
        <end position="216"/>
    </location>
</feature>
<feature type="binding site" evidence="1">
    <location>
        <position position="56"/>
    </location>
    <ligand>
        <name>an N-acylsphingoid base 1-phosphate</name>
        <dbReference type="ChEBI" id="CHEBI:84404"/>
    </ligand>
</feature>
<feature type="binding site" evidence="1">
    <location>
        <position position="60"/>
    </location>
    <ligand>
        <name>an N-acylsphingoid base 1-phosphate</name>
        <dbReference type="ChEBI" id="CHEBI:84404"/>
    </ligand>
</feature>
<feature type="binding site" evidence="1">
    <location>
        <position position="108"/>
    </location>
    <ligand>
        <name>an N-acylsphingoid base 1-phosphate</name>
        <dbReference type="ChEBI" id="CHEBI:84404"/>
    </ligand>
</feature>
<feature type="binding site" evidence="1">
    <location>
        <position position="112"/>
    </location>
    <ligand>
        <name>an N-acylsphingoid base 1-phosphate</name>
        <dbReference type="ChEBI" id="CHEBI:84404"/>
    </ligand>
</feature>
<feature type="binding site" evidence="1">
    <location>
        <position position="152"/>
    </location>
    <ligand>
        <name>an N-acylsphingoid base 1-phosphate</name>
        <dbReference type="ChEBI" id="CHEBI:84404"/>
    </ligand>
</feature>
<reference key="1">
    <citation type="journal article" date="2004" name="Genome Res.">
        <title>The status, quality, and expansion of the NIH full-length cDNA project: the Mammalian Gene Collection (MGC).</title>
        <authorList>
            <consortium name="The MGC Project Team"/>
        </authorList>
    </citation>
    <scope>NUCLEOTIDE SEQUENCE [LARGE SCALE MRNA]</scope>
    <source>
        <tissue>Testis</tissue>
    </source>
</reference>
<evidence type="ECO:0000250" key="1">
    <source>
        <dbReference type="UniProtKB" id="Q5TA50"/>
    </source>
</evidence>
<evidence type="ECO:0000305" key="2"/>